<gene>
    <name type="primary">hmpA-2</name>
    <name type="synonym">FLHb-2</name>
    <name type="ORF">GLP15_347</name>
</gene>
<evidence type="ECO:0000250" key="1"/>
<evidence type="ECO:0000255" key="2">
    <source>
        <dbReference type="PROSITE-ProRule" id="PRU00238"/>
    </source>
</evidence>
<evidence type="ECO:0000255" key="3">
    <source>
        <dbReference type="PROSITE-ProRule" id="PRU00716"/>
    </source>
</evidence>
<evidence type="ECO:0000305" key="4"/>
<accession>E1F8H4</accession>
<feature type="chain" id="PRO_0000409356" description="Flavohemoprotein-2">
    <location>
        <begin position="1"/>
        <end position="457"/>
    </location>
</feature>
<feature type="domain" description="Globin" evidence="2">
    <location>
        <begin position="2"/>
        <end position="157"/>
    </location>
</feature>
<feature type="domain" description="FAD-binding FR-type" evidence="3">
    <location>
        <begin position="171"/>
        <end position="278"/>
    </location>
</feature>
<feature type="region of interest" description="Reductase" evidence="1">
    <location>
        <begin position="168"/>
        <end position="456"/>
    </location>
</feature>
<feature type="active site" description="Charge relay system" evidence="1">
    <location>
        <position position="116"/>
    </location>
</feature>
<feature type="active site" description="Charge relay system" evidence="1">
    <location>
        <position position="156"/>
    </location>
</feature>
<feature type="binding site" description="proximal binding residue" evidence="2">
    <location>
        <position position="106"/>
    </location>
    <ligand>
        <name>heme b</name>
        <dbReference type="ChEBI" id="CHEBI:60344"/>
    </ligand>
    <ligandPart>
        <name>Fe</name>
        <dbReference type="ChEBI" id="CHEBI:18248"/>
    </ligandPart>
</feature>
<feature type="binding site" evidence="1">
    <location>
        <position position="210"/>
    </location>
    <ligand>
        <name>FAD</name>
        <dbReference type="ChEBI" id="CHEBI:57692"/>
    </ligand>
</feature>
<feature type="binding site" evidence="1">
    <location>
        <begin position="227"/>
        <end position="230"/>
    </location>
    <ligand>
        <name>FAD</name>
        <dbReference type="ChEBI" id="CHEBI:57692"/>
    </ligand>
</feature>
<feature type="binding site" evidence="1">
    <location>
        <begin position="320"/>
        <end position="325"/>
    </location>
    <ligand>
        <name>NADP(+)</name>
        <dbReference type="ChEBI" id="CHEBI:58349"/>
    </ligand>
</feature>
<feature type="binding site" evidence="1">
    <location>
        <begin position="449"/>
        <end position="452"/>
    </location>
    <ligand>
        <name>FAD</name>
        <dbReference type="ChEBI" id="CHEBI:57692"/>
    </ligand>
</feature>
<feature type="site" description="Involved in heme-bound ligand stabilization and O-O bond activation" evidence="1">
    <location>
        <position position="30"/>
    </location>
</feature>
<feature type="site" description="Influences the redox potential of the prosthetic heme and FAD groups" evidence="1">
    <location>
        <position position="105"/>
    </location>
</feature>
<feature type="site" description="Influences the redox potential of the prosthetic heme and FAD groups" evidence="1">
    <location>
        <position position="448"/>
    </location>
</feature>
<name>HMP2_GIAIA</name>
<protein>
    <recommendedName>
        <fullName>Flavohemoprotein-2</fullName>
    </recommendedName>
    <alternativeName>
        <fullName>Flavohemoglobin-2</fullName>
        <shortName>FlavoHb-2</shortName>
    </alternativeName>
    <alternativeName>
        <fullName>Hemoglobin-like protein-2</fullName>
    </alternativeName>
    <alternativeName>
        <fullName>Nitric oxide dioxygenase-2</fullName>
        <shortName>NO oxygenase-2</shortName>
        <shortName>NOD-2</shortName>
        <ecNumber>1.14.12.17</ecNumber>
    </alternativeName>
</protein>
<dbReference type="EC" id="1.14.12.17"/>
<dbReference type="EMBL" id="ACVC01000235">
    <property type="protein sequence ID" value="EFO61241.1"/>
    <property type="molecule type" value="Genomic_DNA"/>
</dbReference>
<dbReference type="SMR" id="E1F8H4"/>
<dbReference type="STRING" id="658858.E1F8H4"/>
<dbReference type="EnsemblProtists" id="EFO61241">
    <property type="protein sequence ID" value="EFO61241"/>
    <property type="gene ID" value="GLP15_347"/>
</dbReference>
<dbReference type="VEuPathDB" id="GiardiaDB:GLP15_347"/>
<dbReference type="OMA" id="EICAAWG"/>
<dbReference type="OrthoDB" id="436496at2759"/>
<dbReference type="Proteomes" id="UP000008974">
    <property type="component" value="Unassembled WGS sequence"/>
</dbReference>
<dbReference type="GO" id="GO:0071949">
    <property type="term" value="F:FAD binding"/>
    <property type="evidence" value="ECO:0007669"/>
    <property type="project" value="TreeGrafter"/>
</dbReference>
<dbReference type="GO" id="GO:0020037">
    <property type="term" value="F:heme binding"/>
    <property type="evidence" value="ECO:0007669"/>
    <property type="project" value="InterPro"/>
</dbReference>
<dbReference type="GO" id="GO:0046872">
    <property type="term" value="F:metal ion binding"/>
    <property type="evidence" value="ECO:0007669"/>
    <property type="project" value="UniProtKB-KW"/>
</dbReference>
<dbReference type="GO" id="GO:0008941">
    <property type="term" value="F:nitric oxide dioxygenase NAD(P)H activity"/>
    <property type="evidence" value="ECO:0007669"/>
    <property type="project" value="UniProtKB-EC"/>
</dbReference>
<dbReference type="GO" id="GO:0019825">
    <property type="term" value="F:oxygen binding"/>
    <property type="evidence" value="ECO:0007669"/>
    <property type="project" value="InterPro"/>
</dbReference>
<dbReference type="GO" id="GO:0005344">
    <property type="term" value="F:oxygen carrier activity"/>
    <property type="evidence" value="ECO:0007669"/>
    <property type="project" value="UniProtKB-KW"/>
</dbReference>
<dbReference type="GO" id="GO:0071500">
    <property type="term" value="P:cellular response to nitrosative stress"/>
    <property type="evidence" value="ECO:0007669"/>
    <property type="project" value="TreeGrafter"/>
</dbReference>
<dbReference type="GO" id="GO:0046210">
    <property type="term" value="P:nitric oxide catabolic process"/>
    <property type="evidence" value="ECO:0007669"/>
    <property type="project" value="TreeGrafter"/>
</dbReference>
<dbReference type="GO" id="GO:0009636">
    <property type="term" value="P:response to toxic substance"/>
    <property type="evidence" value="ECO:0007669"/>
    <property type="project" value="UniProtKB-KW"/>
</dbReference>
<dbReference type="CDD" id="cd06184">
    <property type="entry name" value="flavohem_like_fad_nad_binding"/>
    <property type="match status" value="1"/>
</dbReference>
<dbReference type="FunFam" id="3.40.50.80:FF:000010">
    <property type="entry name" value="Flavohemoprotein"/>
    <property type="match status" value="1"/>
</dbReference>
<dbReference type="Gene3D" id="1.10.490.10">
    <property type="entry name" value="Globins"/>
    <property type="match status" value="2"/>
</dbReference>
<dbReference type="Gene3D" id="3.40.50.80">
    <property type="entry name" value="Nucleotide-binding domain of ferredoxin-NADP reductase (FNR) module"/>
    <property type="match status" value="1"/>
</dbReference>
<dbReference type="Gene3D" id="2.40.30.10">
    <property type="entry name" value="Translation factors"/>
    <property type="match status" value="1"/>
</dbReference>
<dbReference type="InterPro" id="IPR008333">
    <property type="entry name" value="Cbr1-like_FAD-bd_dom"/>
</dbReference>
<dbReference type="InterPro" id="IPR017927">
    <property type="entry name" value="FAD-bd_FR_type"/>
</dbReference>
<dbReference type="InterPro" id="IPR039261">
    <property type="entry name" value="FNR_nucleotide-bd"/>
</dbReference>
<dbReference type="InterPro" id="IPR000971">
    <property type="entry name" value="Globin"/>
</dbReference>
<dbReference type="InterPro" id="IPR009050">
    <property type="entry name" value="Globin-like_sf"/>
</dbReference>
<dbReference type="InterPro" id="IPR012292">
    <property type="entry name" value="Globin/Proto"/>
</dbReference>
<dbReference type="InterPro" id="IPR001433">
    <property type="entry name" value="OxRdtase_FAD/NAD-bd"/>
</dbReference>
<dbReference type="InterPro" id="IPR017938">
    <property type="entry name" value="Riboflavin_synthase-like_b-brl"/>
</dbReference>
<dbReference type="PANTHER" id="PTHR43396">
    <property type="entry name" value="FLAVOHEMOPROTEIN"/>
    <property type="match status" value="1"/>
</dbReference>
<dbReference type="PANTHER" id="PTHR43396:SF3">
    <property type="entry name" value="FLAVOHEMOPROTEIN"/>
    <property type="match status" value="1"/>
</dbReference>
<dbReference type="Pfam" id="PF00970">
    <property type="entry name" value="FAD_binding_6"/>
    <property type="match status" value="1"/>
</dbReference>
<dbReference type="Pfam" id="PF00042">
    <property type="entry name" value="Globin"/>
    <property type="match status" value="1"/>
</dbReference>
<dbReference type="Pfam" id="PF00175">
    <property type="entry name" value="NAD_binding_1"/>
    <property type="match status" value="1"/>
</dbReference>
<dbReference type="SUPFAM" id="SSF52343">
    <property type="entry name" value="Ferredoxin reductase-like, C-terminal NADP-linked domain"/>
    <property type="match status" value="1"/>
</dbReference>
<dbReference type="SUPFAM" id="SSF46458">
    <property type="entry name" value="Globin-like"/>
    <property type="match status" value="1"/>
</dbReference>
<dbReference type="SUPFAM" id="SSF63380">
    <property type="entry name" value="Riboflavin synthase domain-like"/>
    <property type="match status" value="1"/>
</dbReference>
<dbReference type="PROSITE" id="PS51384">
    <property type="entry name" value="FAD_FR"/>
    <property type="match status" value="1"/>
</dbReference>
<dbReference type="PROSITE" id="PS01033">
    <property type="entry name" value="GLOBIN"/>
    <property type="match status" value="1"/>
</dbReference>
<sequence length="457" mass="51416">MALSEDTIKAVEATAGLIAAQGIEFTRAFYERMLTKNEELKDIFNLAHQRTLRQPKALLDSLVAYALSIRRINELYELKGKDLPWTGHLAELQGFFSVAERVANKHTSVGIQPAQYQIVGAHLLATIEDRVTKDKAVLAAWGKAYEFLADLLIKREEEIYAETEGPEGGWRQTRTFRVEEKTRVNEVICRFRLVPAKGGASVVQHKPGQYLAIFVRNPELFQHQQIRQYSIMSAPNSAYYEIAVHKDGAGTVSRYLHDHVDTGDLLEVAPPYGDFFLRYLEAGEQTAADTQASSEFQMLQGRAVNFAAEKTAPIVLISGGIGQTPLLSMLRFLAQKEGRETARPIFWIHAAHDSRVRAFKEEVDAIREAALPSLRVVTFLSEVRATDREGEDYDFAGRINLDRIPELARLEAGHANPHYFFVGPTGFMTAVEEQLRARSVPDDRIHFEMFGPFKASH</sequence>
<reference key="1">
    <citation type="journal article" date="2010" name="BMC Genomics">
        <title>Genome analysis and comparative genomics of a Giardia intestinalis assemblage E isolate.</title>
        <authorList>
            <person name="Jerlstrom-Hultqvist J."/>
            <person name="Franzen O."/>
            <person name="Ankarklev J."/>
            <person name="Xu F."/>
            <person name="Nohynkova E."/>
            <person name="Andersson J.O."/>
            <person name="Svard S.G."/>
            <person name="Andersson B."/>
        </authorList>
    </citation>
    <scope>NUCLEOTIDE SEQUENCE [LARGE SCALE GENOMIC DNA]</scope>
    <source>
        <strain>P15</strain>
    </source>
</reference>
<proteinExistence type="inferred from homology"/>
<comment type="function">
    <text evidence="1">Flavohemoprotein involved in nitric oxide (NO) detoxification in an aerobic process, termed nitric oxide dioxygenase (NOD) reaction that utilizes O(2) and NAD(P)H to convert NO to nitrate, which protects the protozoan parasite from various noxious nitrogen compounds. Therefore, plays a central role in the inducible response to nitrosative stress. May also be involved in O(2) detoxification (By similarity).</text>
</comment>
<comment type="catalytic activity">
    <reaction>
        <text>2 nitric oxide + NADPH + 2 O2 = 2 nitrate + NADP(+) + H(+)</text>
        <dbReference type="Rhea" id="RHEA:19465"/>
        <dbReference type="ChEBI" id="CHEBI:15378"/>
        <dbReference type="ChEBI" id="CHEBI:15379"/>
        <dbReference type="ChEBI" id="CHEBI:16480"/>
        <dbReference type="ChEBI" id="CHEBI:17632"/>
        <dbReference type="ChEBI" id="CHEBI:57783"/>
        <dbReference type="ChEBI" id="CHEBI:58349"/>
        <dbReference type="EC" id="1.14.12.17"/>
    </reaction>
</comment>
<comment type="catalytic activity">
    <reaction>
        <text>2 nitric oxide + NADH + 2 O2 = 2 nitrate + NAD(+) + H(+)</text>
        <dbReference type="Rhea" id="RHEA:19469"/>
        <dbReference type="ChEBI" id="CHEBI:15378"/>
        <dbReference type="ChEBI" id="CHEBI:15379"/>
        <dbReference type="ChEBI" id="CHEBI:16480"/>
        <dbReference type="ChEBI" id="CHEBI:17632"/>
        <dbReference type="ChEBI" id="CHEBI:57540"/>
        <dbReference type="ChEBI" id="CHEBI:57945"/>
        <dbReference type="EC" id="1.14.12.17"/>
    </reaction>
</comment>
<comment type="cofactor">
    <cofactor evidence="1">
        <name>heme b</name>
        <dbReference type="ChEBI" id="CHEBI:60344"/>
    </cofactor>
    <text evidence="1">Binds 1 heme b group.</text>
</comment>
<comment type="cofactor">
    <cofactor evidence="1">
        <name>FAD</name>
        <dbReference type="ChEBI" id="CHEBI:57692"/>
    </cofactor>
    <text evidence="1">Binds 1 FAD.</text>
</comment>
<comment type="subunit">
    <text evidence="1">Monomer.</text>
</comment>
<comment type="domain">
    <text>Consists of two distinct domains; an N-terminal heme-containing oxygen-binding domain and a C-terminal reductase domain with binding sites for FAD and NAD(P)H.</text>
</comment>
<comment type="similarity">
    <text evidence="2">Belongs to the globin family. Two-domain flavohemoproteins subfamily.</text>
</comment>
<comment type="similarity">
    <text evidence="4">In the C-terminal section; belongs to the flavoprotein pyridine nucleotide cytochrome reductase family.</text>
</comment>
<organism>
    <name type="scientific">Giardia intestinalis (strain P15)</name>
    <name type="common">Giardia lamblia</name>
    <dbReference type="NCBI Taxonomy" id="658858"/>
    <lineage>
        <taxon>Eukaryota</taxon>
        <taxon>Metamonada</taxon>
        <taxon>Diplomonadida</taxon>
        <taxon>Hexamitidae</taxon>
        <taxon>Giardiinae</taxon>
        <taxon>Giardia</taxon>
    </lineage>
</organism>
<keyword id="KW-0216">Detoxification</keyword>
<keyword id="KW-0274">FAD</keyword>
<keyword id="KW-0285">Flavoprotein</keyword>
<keyword id="KW-0349">Heme</keyword>
<keyword id="KW-0408">Iron</keyword>
<keyword id="KW-0479">Metal-binding</keyword>
<keyword id="KW-0520">NAD</keyword>
<keyword id="KW-0521">NADP</keyword>
<keyword id="KW-0560">Oxidoreductase</keyword>
<keyword id="KW-0561">Oxygen transport</keyword>
<keyword id="KW-0813">Transport</keyword>